<keyword id="KW-0002">3D-structure</keyword>
<keyword id="KW-0025">Alternative splicing</keyword>
<keyword id="KW-0225">Disease variant</keyword>
<keyword id="KW-0256">Endoplasmic reticulum</keyword>
<keyword id="KW-0967">Endosome</keyword>
<keyword id="KW-0887">Epilepsy</keyword>
<keyword id="KW-0325">Glycoprotein</keyword>
<keyword id="KW-0458">Lysosome</keyword>
<keyword id="KW-0472">Membrane</keyword>
<keyword id="KW-0479">Metal-binding</keyword>
<keyword id="KW-0539">Nucleus</keyword>
<keyword id="KW-1267">Proteomics identification</keyword>
<keyword id="KW-1185">Reference proteome</keyword>
<keyword id="KW-0732">Signal</keyword>
<keyword id="KW-0808">Transferase</keyword>
<keyword id="KW-0812">Transmembrane</keyword>
<keyword id="KW-1133">Transmembrane helix</keyword>
<keyword id="KW-0832">Ubl conjugation</keyword>
<keyword id="KW-0833">Ubl conjugation pathway</keyword>
<keyword id="KW-0862">Zinc</keyword>
<keyword id="KW-0863">Zinc-finger</keyword>
<dbReference type="EC" id="2.3.2.27" evidence="6 8"/>
<dbReference type="EMBL" id="AF037204">
    <property type="protein sequence ID" value="AAC03769.1"/>
    <property type="molecule type" value="mRNA"/>
</dbReference>
<dbReference type="EMBL" id="AF070558">
    <property type="protein sequence ID" value="AAC28641.1"/>
    <property type="molecule type" value="mRNA"/>
</dbReference>
<dbReference type="EMBL" id="AK313304">
    <property type="protein sequence ID" value="BAG36109.1"/>
    <property type="molecule type" value="mRNA"/>
</dbReference>
<dbReference type="EMBL" id="AK090638">
    <property type="protein sequence ID" value="BAG52202.1"/>
    <property type="molecule type" value="mRNA"/>
</dbReference>
<dbReference type="EMBL" id="AK090771">
    <property type="protein sequence ID" value="BAG52224.1"/>
    <property type="molecule type" value="mRNA"/>
</dbReference>
<dbReference type="EMBL" id="CR456804">
    <property type="protein sequence ID" value="CAG33085.1"/>
    <property type="molecule type" value="mRNA"/>
</dbReference>
<dbReference type="EMBL" id="AC069216">
    <property type="status" value="NOT_ANNOTATED_CDS"/>
    <property type="molecule type" value="Genomic_DNA"/>
</dbReference>
<dbReference type="EMBL" id="AC117395">
    <property type="status" value="NOT_ANNOTATED_CDS"/>
    <property type="molecule type" value="Genomic_DNA"/>
</dbReference>
<dbReference type="EMBL" id="CH471052">
    <property type="protein sequence ID" value="EAW78858.1"/>
    <property type="molecule type" value="Genomic_DNA"/>
</dbReference>
<dbReference type="EMBL" id="CH471052">
    <property type="protein sequence ID" value="EAW78859.1"/>
    <property type="molecule type" value="Genomic_DNA"/>
</dbReference>
<dbReference type="EMBL" id="CH471052">
    <property type="protein sequence ID" value="EAW78860.1"/>
    <property type="molecule type" value="Genomic_DNA"/>
</dbReference>
<dbReference type="EMBL" id="CH471052">
    <property type="protein sequence ID" value="EAW78861.1"/>
    <property type="molecule type" value="Genomic_DNA"/>
</dbReference>
<dbReference type="EMBL" id="CH471052">
    <property type="protein sequence ID" value="EAW78862.1"/>
    <property type="molecule type" value="Genomic_DNA"/>
</dbReference>
<dbReference type="EMBL" id="CH471052">
    <property type="protein sequence ID" value="EAW78863.1"/>
    <property type="molecule type" value="Genomic_DNA"/>
</dbReference>
<dbReference type="EMBL" id="BC009803">
    <property type="protein sequence ID" value="AAH09803.1"/>
    <property type="molecule type" value="mRNA"/>
</dbReference>
<dbReference type="EMBL" id="BC009781">
    <property type="protein sequence ID" value="AAH09781.1"/>
    <property type="molecule type" value="mRNA"/>
</dbReference>
<dbReference type="EMBL" id="BC017878">
    <property type="protein sequence ID" value="AAH17878.1"/>
    <property type="status" value="ALT_SEQ"/>
    <property type="molecule type" value="mRNA"/>
</dbReference>
<dbReference type="CCDS" id="CCDS3146.1">
    <molecule id="O43567-1"/>
</dbReference>
<dbReference type="CCDS" id="CCDS87154.1">
    <molecule id="O43567-2"/>
</dbReference>
<dbReference type="RefSeq" id="NP_001365214.1">
    <molecule id="O43567-1"/>
    <property type="nucleotide sequence ID" value="NM_001378285.1"/>
</dbReference>
<dbReference type="RefSeq" id="NP_001365215.1">
    <molecule id="O43567-1"/>
    <property type="nucleotide sequence ID" value="NM_001378286.1"/>
</dbReference>
<dbReference type="RefSeq" id="NP_001365216.1">
    <molecule id="O43567-2"/>
    <property type="nucleotide sequence ID" value="NM_001378287.1"/>
</dbReference>
<dbReference type="RefSeq" id="NP_001365217.1">
    <molecule id="O43567-2"/>
    <property type="nucleotide sequence ID" value="NM_001378288.1"/>
</dbReference>
<dbReference type="RefSeq" id="NP_001365218.1">
    <molecule id="O43567-2"/>
    <property type="nucleotide sequence ID" value="NM_001378289.1"/>
</dbReference>
<dbReference type="RefSeq" id="NP_001365219.1">
    <molecule id="O43567-2"/>
    <property type="nucleotide sequence ID" value="NM_001378290.1"/>
</dbReference>
<dbReference type="RefSeq" id="NP_009213.1">
    <molecule id="O43567-1"/>
    <property type="nucleotide sequence ID" value="NM_007282.4"/>
</dbReference>
<dbReference type="RefSeq" id="NP_899237.1">
    <molecule id="O43567-1"/>
    <property type="nucleotide sequence ID" value="NM_183381.3"/>
</dbReference>
<dbReference type="RefSeq" id="NP_899239.2">
    <molecule id="O43567-2"/>
    <property type="nucleotide sequence ID" value="NM_183383.2"/>
</dbReference>
<dbReference type="RefSeq" id="XP_005247149.1">
    <property type="nucleotide sequence ID" value="XM_005247092.3"/>
</dbReference>
<dbReference type="RefSeq" id="XP_011510675.1">
    <molecule id="O43567-1"/>
    <property type="nucleotide sequence ID" value="XM_011512373.3"/>
</dbReference>
<dbReference type="RefSeq" id="XP_011510676.1">
    <property type="nucleotide sequence ID" value="XM_011512374.2"/>
</dbReference>
<dbReference type="RefSeq" id="XP_011510678.1">
    <property type="nucleotide sequence ID" value="XM_011512376.2"/>
</dbReference>
<dbReference type="RefSeq" id="XP_016861143.1">
    <property type="nucleotide sequence ID" value="XM_017005654.1"/>
</dbReference>
<dbReference type="RefSeq" id="XP_016861144.1">
    <property type="nucleotide sequence ID" value="XM_017005655.1"/>
</dbReference>
<dbReference type="RefSeq" id="XP_016861145.1">
    <property type="nucleotide sequence ID" value="XM_017005656.1"/>
</dbReference>
<dbReference type="RefSeq" id="XP_016861146.1">
    <property type="nucleotide sequence ID" value="XM_017005657.1"/>
</dbReference>
<dbReference type="RefSeq" id="XP_016861147.1">
    <property type="nucleotide sequence ID" value="XM_017005658.1"/>
</dbReference>
<dbReference type="RefSeq" id="XP_016861148.1">
    <property type="nucleotide sequence ID" value="XM_017005659.1"/>
</dbReference>
<dbReference type="RefSeq" id="XP_047303335.1">
    <molecule id="O43567-1"/>
    <property type="nucleotide sequence ID" value="XM_047447379.1"/>
</dbReference>
<dbReference type="RefSeq" id="XP_047303336.1">
    <molecule id="O43567-1"/>
    <property type="nucleotide sequence ID" value="XM_047447380.1"/>
</dbReference>
<dbReference type="RefSeq" id="XP_047303337.1">
    <molecule id="O43567-1"/>
    <property type="nucleotide sequence ID" value="XM_047447381.1"/>
</dbReference>
<dbReference type="RefSeq" id="XP_047303338.1">
    <molecule id="O43567-1"/>
    <property type="nucleotide sequence ID" value="XM_047447382.1"/>
</dbReference>
<dbReference type="RefSeq" id="XP_054201085.1">
    <molecule id="O43567-1"/>
    <property type="nucleotide sequence ID" value="XM_054345110.1"/>
</dbReference>
<dbReference type="RefSeq" id="XP_054201086.1">
    <molecule id="O43567-1"/>
    <property type="nucleotide sequence ID" value="XM_054345111.1"/>
</dbReference>
<dbReference type="RefSeq" id="XP_054201087.1">
    <molecule id="O43567-1"/>
    <property type="nucleotide sequence ID" value="XM_054345112.1"/>
</dbReference>
<dbReference type="RefSeq" id="XP_054201088.1">
    <molecule id="O43567-1"/>
    <property type="nucleotide sequence ID" value="XM_054345113.1"/>
</dbReference>
<dbReference type="RefSeq" id="XP_054201089.1">
    <molecule id="O43567-1"/>
    <property type="nucleotide sequence ID" value="XM_054345114.1"/>
</dbReference>
<dbReference type="RefSeq" id="XP_054201090.1">
    <molecule id="O43567-1"/>
    <property type="nucleotide sequence ID" value="XM_054345115.1"/>
</dbReference>
<dbReference type="RefSeq" id="XP_054201091.1">
    <molecule id="O43567-1"/>
    <property type="nucleotide sequence ID" value="XM_054345116.1"/>
</dbReference>
<dbReference type="PDB" id="5ZBU">
    <property type="method" value="X-ray"/>
    <property type="resolution" value="3.20 A"/>
    <property type="chains" value="A/D=216-290"/>
</dbReference>
<dbReference type="PDB" id="5ZC4">
    <property type="method" value="X-ray"/>
    <property type="resolution" value="1.91 A"/>
    <property type="chains" value="A/D=216-290"/>
</dbReference>
<dbReference type="PDBsum" id="5ZBU"/>
<dbReference type="PDBsum" id="5ZC4"/>
<dbReference type="SMR" id="O43567"/>
<dbReference type="BioGRID" id="116470">
    <property type="interactions" value="64"/>
</dbReference>
<dbReference type="FunCoup" id="O43567">
    <property type="interactions" value="3769"/>
</dbReference>
<dbReference type="IntAct" id="O43567">
    <property type="interactions" value="50"/>
</dbReference>
<dbReference type="STRING" id="9606.ENSP00000341361"/>
<dbReference type="GlyCosmos" id="O43567">
    <property type="glycosylation" value="1 site, No reported glycans"/>
</dbReference>
<dbReference type="GlyGen" id="O43567">
    <property type="glycosylation" value="4 sites, 1 N-linked glycan (1 site), 1 O-linked glycan (1 site)"/>
</dbReference>
<dbReference type="iPTMnet" id="O43567"/>
<dbReference type="PhosphoSitePlus" id="O43567"/>
<dbReference type="BioMuta" id="RNF13"/>
<dbReference type="jPOST" id="O43567"/>
<dbReference type="MassIVE" id="O43567"/>
<dbReference type="PaxDb" id="9606-ENSP00000341361"/>
<dbReference type="PeptideAtlas" id="O43567"/>
<dbReference type="ProteomicsDB" id="3575"/>
<dbReference type="ProteomicsDB" id="49058">
    <molecule id="O43567-1"/>
</dbReference>
<dbReference type="Pumba" id="O43567"/>
<dbReference type="Antibodypedia" id="2251">
    <property type="antibodies" value="134 antibodies from 27 providers"/>
</dbReference>
<dbReference type="DNASU" id="11342"/>
<dbReference type="Ensembl" id="ENST00000344229.7">
    <molecule id="O43567-1"/>
    <property type="protein sequence ID" value="ENSP00000341361.3"/>
    <property type="gene ID" value="ENSG00000082996.20"/>
</dbReference>
<dbReference type="Ensembl" id="ENST00000361785.10">
    <molecule id="O43567-2"/>
    <property type="protein sequence ID" value="ENSP00000355268.6"/>
    <property type="gene ID" value="ENSG00000082996.20"/>
</dbReference>
<dbReference type="Ensembl" id="ENST00000392894.8">
    <molecule id="O43567-1"/>
    <property type="protein sequence ID" value="ENSP00000376628.3"/>
    <property type="gene ID" value="ENSG00000082996.20"/>
</dbReference>
<dbReference type="GeneID" id="11342"/>
<dbReference type="KEGG" id="hsa:11342"/>
<dbReference type="MANE-Select" id="ENST00000392894.8">
    <property type="protein sequence ID" value="ENSP00000376628.3"/>
    <property type="RefSeq nucleotide sequence ID" value="NM_183381.3"/>
    <property type="RefSeq protein sequence ID" value="NP_899237.1"/>
</dbReference>
<dbReference type="UCSC" id="uc003exn.5">
    <molecule id="O43567-1"/>
    <property type="organism name" value="human"/>
</dbReference>
<dbReference type="AGR" id="HGNC:10057"/>
<dbReference type="CTD" id="11342"/>
<dbReference type="DisGeNET" id="11342"/>
<dbReference type="GeneCards" id="RNF13"/>
<dbReference type="HGNC" id="HGNC:10057">
    <property type="gene designation" value="RNF13"/>
</dbReference>
<dbReference type="HPA" id="ENSG00000082996">
    <property type="expression patterns" value="Low tissue specificity"/>
</dbReference>
<dbReference type="MalaCards" id="RNF13"/>
<dbReference type="MIM" id="609247">
    <property type="type" value="gene"/>
</dbReference>
<dbReference type="MIM" id="618379">
    <property type="type" value="phenotype"/>
</dbReference>
<dbReference type="neXtProt" id="NX_O43567"/>
<dbReference type="OpenTargets" id="ENSG00000082996"/>
<dbReference type="Orphanet" id="544503">
    <property type="disease" value="RNF13-related severe early-onset epileptic encephalopathy"/>
</dbReference>
<dbReference type="PharmGKB" id="PA34422"/>
<dbReference type="VEuPathDB" id="HostDB:ENSG00000082996"/>
<dbReference type="eggNOG" id="KOG4628">
    <property type="taxonomic scope" value="Eukaryota"/>
</dbReference>
<dbReference type="GeneTree" id="ENSGT00940000154942"/>
<dbReference type="HOGENOM" id="CLU_035275_1_1_1"/>
<dbReference type="InParanoid" id="O43567"/>
<dbReference type="OMA" id="ECYLIAF"/>
<dbReference type="OrthoDB" id="8062037at2759"/>
<dbReference type="PAN-GO" id="O43567">
    <property type="GO annotations" value="3 GO annotations based on evolutionary models"/>
</dbReference>
<dbReference type="PhylomeDB" id="O43567"/>
<dbReference type="TreeFam" id="TF317486"/>
<dbReference type="PathwayCommons" id="O43567"/>
<dbReference type="SignaLink" id="O43567"/>
<dbReference type="SIGNOR" id="O43567"/>
<dbReference type="UniPathway" id="UPA00143"/>
<dbReference type="BioGRID-ORCS" id="11342">
    <property type="hits" value="18 hits in 1168 CRISPR screens"/>
</dbReference>
<dbReference type="ChiTaRS" id="RNF13">
    <property type="organism name" value="human"/>
</dbReference>
<dbReference type="GeneWiki" id="RNF13"/>
<dbReference type="GenomeRNAi" id="11342"/>
<dbReference type="Pharos" id="O43567">
    <property type="development level" value="Tbio"/>
</dbReference>
<dbReference type="PRO" id="PR:O43567"/>
<dbReference type="Proteomes" id="UP000005640">
    <property type="component" value="Chromosome 3"/>
</dbReference>
<dbReference type="RNAct" id="O43567">
    <property type="molecule type" value="protein"/>
</dbReference>
<dbReference type="Bgee" id="ENSG00000082996">
    <property type="expression patterns" value="Expressed in corpus callosum and 217 other cell types or tissues"/>
</dbReference>
<dbReference type="ExpressionAtlas" id="O43567">
    <property type="expression patterns" value="baseline and differential"/>
</dbReference>
<dbReference type="GO" id="GO:0005737">
    <property type="term" value="C:cytoplasm"/>
    <property type="evidence" value="ECO:0000318"/>
    <property type="project" value="GO_Central"/>
</dbReference>
<dbReference type="GO" id="GO:0005829">
    <property type="term" value="C:cytosol"/>
    <property type="evidence" value="ECO:0000314"/>
    <property type="project" value="HPA"/>
</dbReference>
<dbReference type="GO" id="GO:0005783">
    <property type="term" value="C:endoplasmic reticulum"/>
    <property type="evidence" value="ECO:0000314"/>
    <property type="project" value="UniProtKB"/>
</dbReference>
<dbReference type="GO" id="GO:0005789">
    <property type="term" value="C:endoplasmic reticulum membrane"/>
    <property type="evidence" value="ECO:0007669"/>
    <property type="project" value="UniProtKB-SubCell"/>
</dbReference>
<dbReference type="GO" id="GO:0005768">
    <property type="term" value="C:endosome"/>
    <property type="evidence" value="ECO:0000314"/>
    <property type="project" value="UniProtKB"/>
</dbReference>
<dbReference type="GO" id="GO:0043231">
    <property type="term" value="C:intracellular membrane-bounded organelle"/>
    <property type="evidence" value="ECO:0000314"/>
    <property type="project" value="HPA"/>
</dbReference>
<dbReference type="GO" id="GO:0031902">
    <property type="term" value="C:late endosome membrane"/>
    <property type="evidence" value="ECO:0000250"/>
    <property type="project" value="UniProtKB"/>
</dbReference>
<dbReference type="GO" id="GO:0005765">
    <property type="term" value="C:lysosomal membrane"/>
    <property type="evidence" value="ECO:0007005"/>
    <property type="project" value="UniProtKB"/>
</dbReference>
<dbReference type="GO" id="GO:0005637">
    <property type="term" value="C:nuclear inner membrane"/>
    <property type="evidence" value="ECO:0007669"/>
    <property type="project" value="UniProtKB-SubCell"/>
</dbReference>
<dbReference type="GO" id="GO:0005654">
    <property type="term" value="C:nucleoplasm"/>
    <property type="evidence" value="ECO:0000314"/>
    <property type="project" value="HPA"/>
</dbReference>
<dbReference type="GO" id="GO:0008432">
    <property type="term" value="F:JUN kinase binding"/>
    <property type="evidence" value="ECO:0000314"/>
    <property type="project" value="UniProtKB"/>
</dbReference>
<dbReference type="GO" id="GO:0061630">
    <property type="term" value="F:ubiquitin protein ligase activity"/>
    <property type="evidence" value="ECO:0000318"/>
    <property type="project" value="GO_Central"/>
</dbReference>
<dbReference type="GO" id="GO:0004842">
    <property type="term" value="F:ubiquitin-protein transferase activity"/>
    <property type="evidence" value="ECO:0000250"/>
    <property type="project" value="UniProtKB"/>
</dbReference>
<dbReference type="GO" id="GO:0008270">
    <property type="term" value="F:zinc ion binding"/>
    <property type="evidence" value="ECO:0007669"/>
    <property type="project" value="UniProtKB-KW"/>
</dbReference>
<dbReference type="GO" id="GO:0051640">
    <property type="term" value="P:organelle localization"/>
    <property type="evidence" value="ECO:0000315"/>
    <property type="project" value="UniProtKB"/>
</dbReference>
<dbReference type="GO" id="GO:0046330">
    <property type="term" value="P:positive regulation of JNK cascade"/>
    <property type="evidence" value="ECO:0000315"/>
    <property type="project" value="UniProtKB"/>
</dbReference>
<dbReference type="GO" id="GO:0051865">
    <property type="term" value="P:protein autoubiquitination"/>
    <property type="evidence" value="ECO:0000250"/>
    <property type="project" value="UniProtKB"/>
</dbReference>
<dbReference type="GO" id="GO:0006511">
    <property type="term" value="P:ubiquitin-dependent protein catabolic process"/>
    <property type="evidence" value="ECO:0000318"/>
    <property type="project" value="GO_Central"/>
</dbReference>
<dbReference type="CDD" id="cd02123">
    <property type="entry name" value="PA_C_RZF_like"/>
    <property type="match status" value="1"/>
</dbReference>
<dbReference type="CDD" id="cd16796">
    <property type="entry name" value="RING-H2_RNF13"/>
    <property type="match status" value="1"/>
</dbReference>
<dbReference type="FunFam" id="3.50.30.30:FF:000012">
    <property type="entry name" value="E3 ubiquitin-protein ligase RNF13"/>
    <property type="match status" value="1"/>
</dbReference>
<dbReference type="FunFam" id="3.30.40.10:FF:000099">
    <property type="entry name" value="E3 ubiquitin-protein ligase RNF167"/>
    <property type="match status" value="1"/>
</dbReference>
<dbReference type="Gene3D" id="3.50.30.30">
    <property type="match status" value="1"/>
</dbReference>
<dbReference type="Gene3D" id="3.30.40.10">
    <property type="entry name" value="Zinc/RING finger domain, C3HC4 (zinc finger)"/>
    <property type="match status" value="1"/>
</dbReference>
<dbReference type="InterPro" id="IPR051653">
    <property type="entry name" value="E3_ligase_sorting_rcpt"/>
</dbReference>
<dbReference type="InterPro" id="IPR046450">
    <property type="entry name" value="PA_dom_sf"/>
</dbReference>
<dbReference type="InterPro" id="IPR003137">
    <property type="entry name" value="PA_domain"/>
</dbReference>
<dbReference type="InterPro" id="IPR001841">
    <property type="entry name" value="Znf_RING"/>
</dbReference>
<dbReference type="InterPro" id="IPR013083">
    <property type="entry name" value="Znf_RING/FYVE/PHD"/>
</dbReference>
<dbReference type="InterPro" id="IPR044744">
    <property type="entry name" value="ZNRF4/RNF13/RNF167_PA"/>
</dbReference>
<dbReference type="PANTHER" id="PTHR47168:SF1">
    <property type="entry name" value="OS02G0798600 PROTEIN"/>
    <property type="match status" value="1"/>
</dbReference>
<dbReference type="PANTHER" id="PTHR47168">
    <property type="entry name" value="RING ZINC FINGER DOMAIN SUPERFAMILY PROTEIN-RELATED"/>
    <property type="match status" value="1"/>
</dbReference>
<dbReference type="Pfam" id="PF02225">
    <property type="entry name" value="PA"/>
    <property type="match status" value="1"/>
</dbReference>
<dbReference type="Pfam" id="PF13639">
    <property type="entry name" value="zf-RING_2"/>
    <property type="match status" value="1"/>
</dbReference>
<dbReference type="SMART" id="SM00184">
    <property type="entry name" value="RING"/>
    <property type="match status" value="1"/>
</dbReference>
<dbReference type="SUPFAM" id="SSF52025">
    <property type="entry name" value="PA domain"/>
    <property type="match status" value="1"/>
</dbReference>
<dbReference type="SUPFAM" id="SSF57850">
    <property type="entry name" value="RING/U-box"/>
    <property type="match status" value="1"/>
</dbReference>
<dbReference type="PROSITE" id="PS50089">
    <property type="entry name" value="ZF_RING_2"/>
    <property type="match status" value="1"/>
</dbReference>
<organism>
    <name type="scientific">Homo sapiens</name>
    <name type="common">Human</name>
    <dbReference type="NCBI Taxonomy" id="9606"/>
    <lineage>
        <taxon>Eukaryota</taxon>
        <taxon>Metazoa</taxon>
        <taxon>Chordata</taxon>
        <taxon>Craniata</taxon>
        <taxon>Vertebrata</taxon>
        <taxon>Euteleostomi</taxon>
        <taxon>Mammalia</taxon>
        <taxon>Eutheria</taxon>
        <taxon>Euarchontoglires</taxon>
        <taxon>Primates</taxon>
        <taxon>Haplorrhini</taxon>
        <taxon>Catarrhini</taxon>
        <taxon>Hominidae</taxon>
        <taxon>Homo</taxon>
    </lineage>
</organism>
<reference key="1">
    <citation type="journal article" date="1998" name="Prim. Sens. Neuron">
        <title>The gene for a RING zinc finger protein is expressed in the inner chick ear after noise exposure.</title>
        <authorList>
            <person name="Lomax M.I."/>
            <person name="Warner S.J."/>
            <person name="Bersirli C.G."/>
            <person name="Gong T.-W.L."/>
        </authorList>
    </citation>
    <scope>NUCLEOTIDE SEQUENCE [MRNA] (ISOFORM 1)</scope>
</reference>
<reference key="2">
    <citation type="submission" date="1998-06" db="EMBL/GenBank/DDBJ databases">
        <authorList>
            <person name="Yu W."/>
            <person name="Gibbs R.A."/>
        </authorList>
    </citation>
    <scope>NUCLEOTIDE SEQUENCE [LARGE SCALE MRNA] (ISOFORM 1)</scope>
    <source>
        <tissue>Brain</tissue>
    </source>
</reference>
<reference key="3">
    <citation type="journal article" date="2004" name="Nat. Genet.">
        <title>Complete sequencing and characterization of 21,243 full-length human cDNAs.</title>
        <authorList>
            <person name="Ota T."/>
            <person name="Suzuki Y."/>
            <person name="Nishikawa T."/>
            <person name="Otsuki T."/>
            <person name="Sugiyama T."/>
            <person name="Irie R."/>
            <person name="Wakamatsu A."/>
            <person name="Hayashi K."/>
            <person name="Sato H."/>
            <person name="Nagai K."/>
            <person name="Kimura K."/>
            <person name="Makita H."/>
            <person name="Sekine M."/>
            <person name="Obayashi M."/>
            <person name="Nishi T."/>
            <person name="Shibahara T."/>
            <person name="Tanaka T."/>
            <person name="Ishii S."/>
            <person name="Yamamoto J."/>
            <person name="Saito K."/>
            <person name="Kawai Y."/>
            <person name="Isono Y."/>
            <person name="Nakamura Y."/>
            <person name="Nagahari K."/>
            <person name="Murakami K."/>
            <person name="Yasuda T."/>
            <person name="Iwayanagi T."/>
            <person name="Wagatsuma M."/>
            <person name="Shiratori A."/>
            <person name="Sudo H."/>
            <person name="Hosoiri T."/>
            <person name="Kaku Y."/>
            <person name="Kodaira H."/>
            <person name="Kondo H."/>
            <person name="Sugawara M."/>
            <person name="Takahashi M."/>
            <person name="Kanda K."/>
            <person name="Yokoi T."/>
            <person name="Furuya T."/>
            <person name="Kikkawa E."/>
            <person name="Omura Y."/>
            <person name="Abe K."/>
            <person name="Kamihara K."/>
            <person name="Katsuta N."/>
            <person name="Sato K."/>
            <person name="Tanikawa M."/>
            <person name="Yamazaki M."/>
            <person name="Ninomiya K."/>
            <person name="Ishibashi T."/>
            <person name="Yamashita H."/>
            <person name="Murakawa K."/>
            <person name="Fujimori K."/>
            <person name="Tanai H."/>
            <person name="Kimata M."/>
            <person name="Watanabe M."/>
            <person name="Hiraoka S."/>
            <person name="Chiba Y."/>
            <person name="Ishida S."/>
            <person name="Ono Y."/>
            <person name="Takiguchi S."/>
            <person name="Watanabe S."/>
            <person name="Yosida M."/>
            <person name="Hotuta T."/>
            <person name="Kusano J."/>
            <person name="Kanehori K."/>
            <person name="Takahashi-Fujii A."/>
            <person name="Hara H."/>
            <person name="Tanase T.-O."/>
            <person name="Nomura Y."/>
            <person name="Togiya S."/>
            <person name="Komai F."/>
            <person name="Hara R."/>
            <person name="Takeuchi K."/>
            <person name="Arita M."/>
            <person name="Imose N."/>
            <person name="Musashino K."/>
            <person name="Yuuki H."/>
            <person name="Oshima A."/>
            <person name="Sasaki N."/>
            <person name="Aotsuka S."/>
            <person name="Yoshikawa Y."/>
            <person name="Matsunawa H."/>
            <person name="Ichihara T."/>
            <person name="Shiohata N."/>
            <person name="Sano S."/>
            <person name="Moriya S."/>
            <person name="Momiyama H."/>
            <person name="Satoh N."/>
            <person name="Takami S."/>
            <person name="Terashima Y."/>
            <person name="Suzuki O."/>
            <person name="Nakagawa S."/>
            <person name="Senoh A."/>
            <person name="Mizoguchi H."/>
            <person name="Goto Y."/>
            <person name="Shimizu F."/>
            <person name="Wakebe H."/>
            <person name="Hishigaki H."/>
            <person name="Watanabe T."/>
            <person name="Sugiyama A."/>
            <person name="Takemoto M."/>
            <person name="Kawakami B."/>
            <person name="Yamazaki M."/>
            <person name="Watanabe K."/>
            <person name="Kumagai A."/>
            <person name="Itakura S."/>
            <person name="Fukuzumi Y."/>
            <person name="Fujimori Y."/>
            <person name="Komiyama M."/>
            <person name="Tashiro H."/>
            <person name="Tanigami A."/>
            <person name="Fujiwara T."/>
            <person name="Ono T."/>
            <person name="Yamada K."/>
            <person name="Fujii Y."/>
            <person name="Ozaki K."/>
            <person name="Hirao M."/>
            <person name="Ohmori Y."/>
            <person name="Kawabata A."/>
            <person name="Hikiji T."/>
            <person name="Kobatake N."/>
            <person name="Inagaki H."/>
            <person name="Ikema Y."/>
            <person name="Okamoto S."/>
            <person name="Okitani R."/>
            <person name="Kawakami T."/>
            <person name="Noguchi S."/>
            <person name="Itoh T."/>
            <person name="Shigeta K."/>
            <person name="Senba T."/>
            <person name="Matsumura K."/>
            <person name="Nakajima Y."/>
            <person name="Mizuno T."/>
            <person name="Morinaga M."/>
            <person name="Sasaki M."/>
            <person name="Togashi T."/>
            <person name="Oyama M."/>
            <person name="Hata H."/>
            <person name="Watanabe M."/>
            <person name="Komatsu T."/>
            <person name="Mizushima-Sugano J."/>
            <person name="Satoh T."/>
            <person name="Shirai Y."/>
            <person name="Takahashi Y."/>
            <person name="Nakagawa K."/>
            <person name="Okumura K."/>
            <person name="Nagase T."/>
            <person name="Nomura N."/>
            <person name="Kikuchi H."/>
            <person name="Masuho Y."/>
            <person name="Yamashita R."/>
            <person name="Nakai K."/>
            <person name="Yada T."/>
            <person name="Nakamura Y."/>
            <person name="Ohara O."/>
            <person name="Isogai T."/>
            <person name="Sugano S."/>
        </authorList>
    </citation>
    <scope>NUCLEOTIDE SEQUENCE [LARGE SCALE MRNA] (ISOFORMS 1 AND 2)</scope>
    <source>
        <tissue>Amygdala</tissue>
        <tissue>Glial tumor</tissue>
        <tissue>Spleen</tissue>
    </source>
</reference>
<reference key="4">
    <citation type="submission" date="2004-06" db="EMBL/GenBank/DDBJ databases">
        <title>Cloning of human full open reading frames in Gateway(TM) system entry vector (pDONR201).</title>
        <authorList>
            <person name="Ebert L."/>
            <person name="Schick M."/>
            <person name="Neubert P."/>
            <person name="Schatten R."/>
            <person name="Henze S."/>
            <person name="Korn B."/>
        </authorList>
    </citation>
    <scope>NUCLEOTIDE SEQUENCE [LARGE SCALE MRNA] (ISOFORM 1)</scope>
</reference>
<reference key="5">
    <citation type="journal article" date="2006" name="Nature">
        <title>The DNA sequence, annotation and analysis of human chromosome 3.</title>
        <authorList>
            <person name="Muzny D.M."/>
            <person name="Scherer S.E."/>
            <person name="Kaul R."/>
            <person name="Wang J."/>
            <person name="Yu J."/>
            <person name="Sudbrak R."/>
            <person name="Buhay C.J."/>
            <person name="Chen R."/>
            <person name="Cree A."/>
            <person name="Ding Y."/>
            <person name="Dugan-Rocha S."/>
            <person name="Gill R."/>
            <person name="Gunaratne P."/>
            <person name="Harris R.A."/>
            <person name="Hawes A.C."/>
            <person name="Hernandez J."/>
            <person name="Hodgson A.V."/>
            <person name="Hume J."/>
            <person name="Jackson A."/>
            <person name="Khan Z.M."/>
            <person name="Kovar-Smith C."/>
            <person name="Lewis L.R."/>
            <person name="Lozado R.J."/>
            <person name="Metzker M.L."/>
            <person name="Milosavljevic A."/>
            <person name="Miner G.R."/>
            <person name="Morgan M.B."/>
            <person name="Nazareth L.V."/>
            <person name="Scott G."/>
            <person name="Sodergren E."/>
            <person name="Song X.-Z."/>
            <person name="Steffen D."/>
            <person name="Wei S."/>
            <person name="Wheeler D.A."/>
            <person name="Wright M.W."/>
            <person name="Worley K.C."/>
            <person name="Yuan Y."/>
            <person name="Zhang Z."/>
            <person name="Adams C.Q."/>
            <person name="Ansari-Lari M.A."/>
            <person name="Ayele M."/>
            <person name="Brown M.J."/>
            <person name="Chen G."/>
            <person name="Chen Z."/>
            <person name="Clendenning J."/>
            <person name="Clerc-Blankenburg K.P."/>
            <person name="Chen R."/>
            <person name="Chen Z."/>
            <person name="Davis C."/>
            <person name="Delgado O."/>
            <person name="Dinh H.H."/>
            <person name="Dong W."/>
            <person name="Draper H."/>
            <person name="Ernst S."/>
            <person name="Fu G."/>
            <person name="Gonzalez-Garay M.L."/>
            <person name="Garcia D.K."/>
            <person name="Gillett W."/>
            <person name="Gu J."/>
            <person name="Hao B."/>
            <person name="Haugen E."/>
            <person name="Havlak P."/>
            <person name="He X."/>
            <person name="Hennig S."/>
            <person name="Hu S."/>
            <person name="Huang W."/>
            <person name="Jackson L.R."/>
            <person name="Jacob L.S."/>
            <person name="Kelly S.H."/>
            <person name="Kube M."/>
            <person name="Levy R."/>
            <person name="Li Z."/>
            <person name="Liu B."/>
            <person name="Liu J."/>
            <person name="Liu W."/>
            <person name="Lu J."/>
            <person name="Maheshwari M."/>
            <person name="Nguyen B.-V."/>
            <person name="Okwuonu G.O."/>
            <person name="Palmeiri A."/>
            <person name="Pasternak S."/>
            <person name="Perez L.M."/>
            <person name="Phelps K.A."/>
            <person name="Plopper F.J."/>
            <person name="Qiang B."/>
            <person name="Raymond C."/>
            <person name="Rodriguez R."/>
            <person name="Saenphimmachak C."/>
            <person name="Santibanez J."/>
            <person name="Shen H."/>
            <person name="Shen Y."/>
            <person name="Subramanian S."/>
            <person name="Tabor P.E."/>
            <person name="Verduzco D."/>
            <person name="Waldron L."/>
            <person name="Wang J."/>
            <person name="Wang J."/>
            <person name="Wang Q."/>
            <person name="Williams G.A."/>
            <person name="Wong G.K.-S."/>
            <person name="Yao Z."/>
            <person name="Zhang J."/>
            <person name="Zhang X."/>
            <person name="Zhao G."/>
            <person name="Zhou J."/>
            <person name="Zhou Y."/>
            <person name="Nelson D."/>
            <person name="Lehrach H."/>
            <person name="Reinhardt R."/>
            <person name="Naylor S.L."/>
            <person name="Yang H."/>
            <person name="Olson M."/>
            <person name="Weinstock G."/>
            <person name="Gibbs R.A."/>
        </authorList>
    </citation>
    <scope>NUCLEOTIDE SEQUENCE [LARGE SCALE GENOMIC DNA]</scope>
</reference>
<reference key="6">
    <citation type="submission" date="2005-09" db="EMBL/GenBank/DDBJ databases">
        <authorList>
            <person name="Mural R.J."/>
            <person name="Istrail S."/>
            <person name="Sutton G.G."/>
            <person name="Florea L."/>
            <person name="Halpern A.L."/>
            <person name="Mobarry C.M."/>
            <person name="Lippert R."/>
            <person name="Walenz B."/>
            <person name="Shatkay H."/>
            <person name="Dew I."/>
            <person name="Miller J.R."/>
            <person name="Flanigan M.J."/>
            <person name="Edwards N.J."/>
            <person name="Bolanos R."/>
            <person name="Fasulo D."/>
            <person name="Halldorsson B.V."/>
            <person name="Hannenhalli S."/>
            <person name="Turner R."/>
            <person name="Yooseph S."/>
            <person name="Lu F."/>
            <person name="Nusskern D.R."/>
            <person name="Shue B.C."/>
            <person name="Zheng X.H."/>
            <person name="Zhong F."/>
            <person name="Delcher A.L."/>
            <person name="Huson D.H."/>
            <person name="Kravitz S.A."/>
            <person name="Mouchard L."/>
            <person name="Reinert K."/>
            <person name="Remington K.A."/>
            <person name="Clark A.G."/>
            <person name="Waterman M.S."/>
            <person name="Eichler E.E."/>
            <person name="Adams M.D."/>
            <person name="Hunkapiller M.W."/>
            <person name="Myers E.W."/>
            <person name="Venter J.C."/>
        </authorList>
    </citation>
    <scope>NUCLEOTIDE SEQUENCE [LARGE SCALE GENOMIC DNA]</scope>
</reference>
<reference key="7">
    <citation type="journal article" date="2004" name="Genome Res.">
        <title>The status, quality, and expansion of the NIH full-length cDNA project: the Mammalian Gene Collection (MGC).</title>
        <authorList>
            <consortium name="The MGC Project Team"/>
        </authorList>
    </citation>
    <scope>NUCLEOTIDE SEQUENCE [LARGE SCALE MRNA] (ISOFORM 1)</scope>
    <source>
        <tissue>Brain</tissue>
        <tissue>Skeletal muscle</tissue>
        <tissue>Urinary bladder</tissue>
    </source>
</reference>
<reference key="8">
    <citation type="journal article" date="2007" name="Traffic">
        <title>Integral and associated lysosomal membrane proteins.</title>
        <authorList>
            <person name="Schroeder B."/>
            <person name="Wrocklage C."/>
            <person name="Pan C."/>
            <person name="Jaeger R."/>
            <person name="Koesters B."/>
            <person name="Schaefer H."/>
            <person name="Elsaesser H.-P."/>
            <person name="Mann M."/>
            <person name="Hasilik A."/>
        </authorList>
    </citation>
    <scope>SUBCELLULAR LOCATION [LARGE SCALE ANALYSIS]</scope>
    <source>
        <tissue>Placenta</tissue>
    </source>
</reference>
<reference key="9">
    <citation type="journal article" date="2009" name="Cell Res.">
        <title>RNF13: a novel RING-type ubiquitin ligase over-expressed in pancreatic cancer.</title>
        <authorList>
            <person name="Zhang Q."/>
            <person name="Meng Y."/>
            <person name="Zhang L."/>
            <person name="Chen J."/>
            <person name="Zhu D."/>
        </authorList>
    </citation>
    <scope>FUNCTION</scope>
    <scope>CATALYTIC ACTIVITY</scope>
    <scope>SUBCELLULAR LOCATION</scope>
    <scope>TISSUE SPECIFICITY</scope>
    <scope>AUTOUBIQUITINATION</scope>
    <scope>GLYCOSYLATION AT ASN-88</scope>
    <scope>MUTAGENESIS OF ASN-43; ASN-88; CYS-258; HIS-260 AND TRP-270</scope>
</reference>
<reference key="10">
    <citation type="journal article" date="2013" name="J. Biol. Chem.">
        <title>RNF13, a RING finger protein, mediates endoplasmic reticulum stress-induced apoptosis through the inositol-requiring enzyme (IRE1alpha)/c-Jun NH2-terminal kinase pathway.</title>
        <authorList>
            <person name="Arshad M."/>
            <person name="Ye Z."/>
            <person name="Gu X."/>
            <person name="Wong C.K."/>
            <person name="Liu Y."/>
            <person name="Li D."/>
            <person name="Zhou L."/>
            <person name="Zhang Y."/>
            <person name="Bay W.P."/>
            <person name="Yu V.C."/>
            <person name="Li P."/>
        </authorList>
    </citation>
    <scope>FUNCTION</scope>
    <scope>SUBCELLULAR LOCATION</scope>
    <scope>INTERACTION WITH ERN1</scope>
    <scope>MUTAGENESIS OF 1-MET--TYR-183; 52-PRO--PHE-162; 165-GLU--VAL-381; 184-LEU--VAL-207 AND CYS-243</scope>
    <scope>DOMAIN</scope>
</reference>
<reference key="11">
    <citation type="journal article" date="2014" name="Biochem. J.">
        <title>Tumour-associated mutations of PA-TM-RING ubiquitin ligases RNF167/RNF13 identify the PA domain as a determinant for endosomal localization.</title>
        <authorList>
            <person name="van Dijk J.R."/>
            <person name="Yamazaki Y."/>
            <person name="Palmer R.H."/>
        </authorList>
    </citation>
    <scope>FUNCTION</scope>
    <scope>CATALYTIC ACTIVITY</scope>
    <scope>SUBCELLULAR LOCATION</scope>
    <scope>VARIANTS PRO-114; TYR-243 AND 246-GLU--VAL-381 DEL</scope>
    <scope>CHARACTERIZATION OF VARIANTS PRO-114; TYR-243 AND 246-GLU--VAL-381 DEL</scope>
</reference>
<reference key="12">
    <citation type="journal article" date="2019" name="Am. J. Hum. Genet.">
        <title>Heterozygous RNF13 gain-of-function variants are associated with congenital microcephaly, epileptic encephalopathy, blindness, and failure to thrive.</title>
        <authorList>
            <person name="Edvardson S."/>
            <person name="Nicolae C.M."/>
            <person name="Noh G.J."/>
            <person name="Burton J.E."/>
            <person name="Punzi G."/>
            <person name="Shaag A."/>
            <person name="Bischetsrieder J."/>
            <person name="De Grassi A."/>
            <person name="Pierri C.L."/>
            <person name="Elpeleg O."/>
            <person name="Moldovan G.L."/>
        </authorList>
    </citation>
    <scope>FUNCTION</scope>
    <scope>INVOLVEMENT IN DEE73</scope>
    <scope>VARIANTS DEE73 SER-311 AND PRO-312</scope>
    <scope>CHARACTERIZATION OF VARIANT DEE73 SER-311</scope>
</reference>
<evidence type="ECO:0000250" key="1">
    <source>
        <dbReference type="UniProtKB" id="O54965"/>
    </source>
</evidence>
<evidence type="ECO:0000255" key="2"/>
<evidence type="ECO:0000255" key="3">
    <source>
        <dbReference type="PROSITE-ProRule" id="PRU00175"/>
    </source>
</evidence>
<evidence type="ECO:0000256" key="4">
    <source>
        <dbReference type="SAM" id="MobiDB-lite"/>
    </source>
</evidence>
<evidence type="ECO:0000269" key="5">
    <source>
    </source>
</evidence>
<evidence type="ECO:0000269" key="6">
    <source>
    </source>
</evidence>
<evidence type="ECO:0000269" key="7">
    <source>
    </source>
</evidence>
<evidence type="ECO:0000269" key="8">
    <source>
    </source>
</evidence>
<evidence type="ECO:0000269" key="9">
    <source>
    </source>
</evidence>
<evidence type="ECO:0000303" key="10">
    <source>
    </source>
</evidence>
<evidence type="ECO:0000303" key="11">
    <source>
    </source>
</evidence>
<evidence type="ECO:0000303" key="12">
    <source ref="1"/>
</evidence>
<evidence type="ECO:0000305" key="13"/>
<evidence type="ECO:0000305" key="14">
    <source>
    </source>
</evidence>
<evidence type="ECO:0000312" key="15">
    <source>
        <dbReference type="HGNC" id="HGNC:10057"/>
    </source>
</evidence>
<evidence type="ECO:0007829" key="16">
    <source>
        <dbReference type="PDB" id="5ZBU"/>
    </source>
</evidence>
<evidence type="ECO:0007829" key="17">
    <source>
        <dbReference type="PDB" id="5ZC4"/>
    </source>
</evidence>
<name>RNF13_HUMAN</name>
<feature type="signal peptide" evidence="2">
    <location>
        <begin position="1"/>
        <end position="34"/>
    </location>
</feature>
<feature type="chain" id="PRO_0000056054" description="E3 ubiquitin-protein ligase RNF13">
    <location>
        <begin position="35"/>
        <end position="381"/>
    </location>
</feature>
<feature type="topological domain" description="Lumenal" evidence="2">
    <location>
        <begin position="35"/>
        <end position="182"/>
    </location>
</feature>
<feature type="transmembrane region" description="Helical" evidence="2">
    <location>
        <begin position="183"/>
        <end position="203"/>
    </location>
</feature>
<feature type="topological domain" description="Cytoplasmic" evidence="2">
    <location>
        <begin position="204"/>
        <end position="381"/>
    </location>
</feature>
<feature type="domain" description="PA">
    <location>
        <begin position="65"/>
        <end position="160"/>
    </location>
</feature>
<feature type="zinc finger region" description="RING-type; atypical" evidence="3">
    <location>
        <begin position="240"/>
        <end position="282"/>
    </location>
</feature>
<feature type="region of interest" description="Disordered" evidence="4">
    <location>
        <begin position="285"/>
        <end position="381"/>
    </location>
</feature>
<feature type="compositionally biased region" description="Acidic residues" evidence="4">
    <location>
        <begin position="292"/>
        <end position="304"/>
    </location>
</feature>
<feature type="compositionally biased region" description="Acidic residues" evidence="4">
    <location>
        <begin position="339"/>
        <end position="357"/>
    </location>
</feature>
<feature type="glycosylation site" description="N-linked (GlcNAc...) asparagine" evidence="6">
    <location>
        <position position="88"/>
    </location>
</feature>
<feature type="splice variant" id="VSP_055430" description="In isoform 2." evidence="10">
    <original>MLLSIGMLMLSATQVYTI</original>
    <variation>MLILMTSLAWDPTTVSTV</variation>
    <location>
        <begin position="1"/>
        <end position="18"/>
    </location>
</feature>
<feature type="splice variant" id="VSP_055431" description="In isoform 2." evidence="10">
    <location>
        <begin position="19"/>
        <end position="137"/>
    </location>
</feature>
<feature type="sequence variant" id="VAR_086368" description="Found in a tumor sample; uncertain significance; abolished localization to endosomes." evidence="8">
    <original>A</original>
    <variation>P</variation>
    <location>
        <position position="114"/>
    </location>
</feature>
<feature type="sequence variant" id="VAR_086369" description="Found in a tumor sample; uncertain significance; abolished ability to regulate protein trafficking and localization." evidence="8">
    <original>C</original>
    <variation>Y</variation>
    <location>
        <position position="243"/>
    </location>
</feature>
<feature type="sequence variant" id="VAR_086370" description="Found in a tumor sample; uncertain significance; abolished ability to regulate protein trafficking and localization." evidence="8">
    <location>
        <begin position="246"/>
        <end position="381"/>
    </location>
</feature>
<feature type="sequence variant" id="VAR_082117" description="In DEE73; gain-of-function variant; increased ER stress-induced apoptosis." evidence="9">
    <original>L</original>
    <variation>S</variation>
    <location>
        <position position="311"/>
    </location>
</feature>
<feature type="sequence variant" id="VAR_082118" description="In DEE73." evidence="9">
    <original>L</original>
    <variation>P</variation>
    <location>
        <position position="312"/>
    </location>
</feature>
<feature type="mutagenesis site" description="No effect on ER stress-induced JNK activation and apoptosis." evidence="7">
    <location>
        <begin position="1"/>
        <end position="183"/>
    </location>
</feature>
<feature type="mutagenesis site" description="No effect on glycosylation." evidence="6">
    <original>N</original>
    <variation>A</variation>
    <location>
        <position position="43"/>
    </location>
</feature>
<feature type="mutagenesis site" description="No effect on ER stress-induced JNK activation and apoptosis. No effect on interaction with ERN1." evidence="7">
    <location>
        <begin position="52"/>
        <end position="162"/>
    </location>
</feature>
<feature type="mutagenesis site" description="Loss of glycosylation." evidence="6">
    <original>N</original>
    <variation>A</variation>
    <location>
        <position position="88"/>
    </location>
</feature>
<feature type="mutagenesis site" description="Abolishes ER stress-induced JNK activation and apoptosis." evidence="7">
    <location>
        <begin position="165"/>
        <end position="381"/>
    </location>
</feature>
<feature type="mutagenesis site" description="Abolishes ER stress-induced JNK activation and apoptosis. Disrupts localization to endoplasmic reticulum." evidence="7">
    <location>
        <begin position="184"/>
        <end position="207"/>
    </location>
</feature>
<feature type="mutagenesis site" description="Abolishes ER stress-induced JNK activation and apoptosis. Abolishes interaction with ERN1. Does not affect localization to endoplasmic reticulum." evidence="7">
    <original>C</original>
    <variation>W</variation>
    <location>
        <position position="243"/>
    </location>
</feature>
<feature type="mutagenesis site" description="Complete loss of E3 ligase activity; when associated with A-260." evidence="6">
    <original>C</original>
    <variation>A</variation>
    <location>
        <position position="258"/>
    </location>
</feature>
<feature type="mutagenesis site" description="Complete loss of E3 ligase activity; when associated with A-258." evidence="6">
    <original>H</original>
    <variation>A</variation>
    <location>
        <position position="260"/>
    </location>
</feature>
<feature type="mutagenesis site" description="Drastically reduces E3 ligase activity." evidence="6">
    <original>W</original>
    <variation>A</variation>
    <location>
        <position position="270"/>
    </location>
</feature>
<feature type="helix" evidence="17">
    <location>
        <begin position="220"/>
        <end position="223"/>
    </location>
</feature>
<feature type="strand" evidence="17">
    <location>
        <begin position="228"/>
        <end position="230"/>
    </location>
</feature>
<feature type="turn" evidence="17">
    <location>
        <begin position="241"/>
        <end position="243"/>
    </location>
</feature>
<feature type="strand" evidence="17">
    <location>
        <begin position="252"/>
        <end position="255"/>
    </location>
</feature>
<feature type="strand" evidence="17">
    <location>
        <begin position="261"/>
        <end position="263"/>
    </location>
</feature>
<feature type="helix" evidence="17">
    <location>
        <begin position="264"/>
        <end position="273"/>
    </location>
</feature>
<feature type="turn" evidence="17">
    <location>
        <begin position="279"/>
        <end position="281"/>
    </location>
</feature>
<feature type="strand" evidence="16">
    <location>
        <begin position="284"/>
        <end position="286"/>
    </location>
</feature>
<protein>
    <recommendedName>
        <fullName evidence="13">E3 ubiquitin-protein ligase RNF13</fullName>
        <ecNumber evidence="6 8">2.3.2.27</ecNumber>
    </recommendedName>
    <alternativeName>
        <fullName>RING finger protein 13</fullName>
    </alternativeName>
</protein>
<accession>O43567</accession>
<accession>A6NC87</accession>
<accession>B3KR12</accession>
<accession>Q05D66</accession>
<accession>Q6IBJ9</accession>
<proteinExistence type="evidence at protein level"/>
<sequence length="381" mass="42814">MLLSIGMLMLSATQVYTILTVQLFAFLNLLPVEADILAYNFENASQTFDDLPARFGYRLPAEGLKGFLINSKPENACEPIVPPPVKDNSSGTFIVLIRRLDCNFDIKVLNAQRAGYKAAIVHNVDSDDLISMGSNDIEVLKKIDIPSVFIGESSANSLKDEFTYEKGGHLILVPEFSLPLEYYLIPFLIIVGICLILIVIFMITKFVQDRHRARRNRLRKDQLKKLPVHKFKKGDEYDVCAICLDEYEDGDKLRILPCSHAYHCKCVDPWLTKTKKTCPVCKQKVVPSQGDSDSDTDSSQEENEVTEHTPLLRPLASVSAQSFGALSESRSHQNMTESSDYEEDDNEDTDSSDAENEINEHDVVVQLQPNGERDYNIANTV</sequence>
<comment type="function">
    <text evidence="6 7 8 9">E3 ubiquitin-protein ligase that regulates cell proliferation (PubMed:18794910, PubMed:23378536, PubMed:30595371). Involved in apoptosis regulation (PubMed:23378536, PubMed:30595371). Mediates ER stress-induced activation of JNK signaling pathway and apoptosis by promoting ERN1 activation and splicing of XBP1 mRNA (PubMed:23378536, PubMed:30595371). Also involved in protein trafficking and localization (PubMed:24387786).</text>
</comment>
<comment type="catalytic activity">
    <reaction evidence="6 8">
        <text>S-ubiquitinyl-[E2 ubiquitin-conjugating enzyme]-L-cysteine + [acceptor protein]-L-lysine = [E2 ubiquitin-conjugating enzyme]-L-cysteine + N(6)-ubiquitinyl-[acceptor protein]-L-lysine.</text>
        <dbReference type="EC" id="2.3.2.27"/>
    </reaction>
</comment>
<comment type="pathway">
    <text evidence="6 8">Protein modification; protein ubiquitination.</text>
</comment>
<comment type="subunit">
    <text evidence="7">Interacts with ERN1.</text>
</comment>
<comment type="interaction">
    <interactant intactId="EBI-2129183">
        <id>O43567</id>
    </interactant>
    <interactant intactId="EBI-1052908">
        <id>P61088</id>
        <label>UBE2N</label>
    </interactant>
    <organismsDiffer>false</organismsDiffer>
    <experiments>2</experiments>
</comment>
<comment type="subcellular location">
    <subcellularLocation>
        <location evidence="6 7 8">Endoplasmic reticulum membrane</location>
        <topology evidence="2">Single-pass type I membrane protein</topology>
    </subcellularLocation>
    <subcellularLocation>
        <location evidence="14">Late endosome membrane</location>
        <topology evidence="2">Single-pass type I membrane protein</topology>
    </subcellularLocation>
    <subcellularLocation>
        <location evidence="5">Lysosome membrane</location>
        <topology evidence="2">Single-pass type I membrane protein</topology>
    </subcellularLocation>
    <subcellularLocation>
        <location evidence="1">Nucleus inner membrane</location>
        <topology evidence="2">Single-pass type I membrane protein</topology>
    </subcellularLocation>
    <text evidence="1">Under certain conditions, relocalizes to recycling endosomes and to the inner nuclear membrane.</text>
</comment>
<comment type="alternative products">
    <event type="alternative splicing"/>
    <isoform>
        <id>O43567-1</id>
        <name>1</name>
        <sequence type="displayed"/>
    </isoform>
    <isoform>
        <id>O43567-2</id>
        <name>2</name>
        <sequence type="described" ref="VSP_055430 VSP_055431"/>
    </isoform>
</comment>
<comment type="tissue specificity">
    <text evidence="6">Widely expressed (at protein level). In normal pancreas, expressed in islets, but not in ducts, nor in acini (at protein level).</text>
</comment>
<comment type="domain">
    <text evidence="7">The RING-type zinc finger domain is required for E3 ligase activity and for promoting ER stress-induced JNK activation and apoptosis.</text>
</comment>
<comment type="PTM">
    <text evidence="6">Autoubiquitinated.</text>
</comment>
<comment type="disease" evidence="9">
    <disease id="DI-05527">
        <name>Developmental and epileptic encephalopathy 73</name>
        <acronym>DEE73</acronym>
        <description>A form of epileptic encephalopathy, a heterogeneous group of severe early-onset epilepsies characterized by refractory seizures, neurodevelopmental impairment, and poor prognosis. Development is normal prior to seizure onset, after which cognitive and motor delays become apparent. DEE73 is an autosomal dominant form with onset at birth.</description>
        <dbReference type="MIM" id="618379"/>
    </disease>
    <text>The disease is caused by variants affecting the gene represented in this entry.</text>
</comment>
<comment type="sequence caution" evidence="13">
    <conflict type="miscellaneous discrepancy">
        <sequence resource="EMBL-CDS" id="AAH17878"/>
    </conflict>
    <text>Contaminating sequence. Potential poly-A sequence.</text>
</comment>
<gene>
    <name evidence="11 15" type="primary">RNF13</name>
    <name evidence="12" type="synonym">RZF</name>
</gene>